<organism>
    <name type="scientific">Actinobacillus pleuropneumoniae serotype 5b (strain L20)</name>
    <dbReference type="NCBI Taxonomy" id="416269"/>
    <lineage>
        <taxon>Bacteria</taxon>
        <taxon>Pseudomonadati</taxon>
        <taxon>Pseudomonadota</taxon>
        <taxon>Gammaproteobacteria</taxon>
        <taxon>Pasteurellales</taxon>
        <taxon>Pasteurellaceae</taxon>
        <taxon>Actinobacillus</taxon>
    </lineage>
</organism>
<keyword id="KW-0963">Cytoplasm</keyword>
<keyword id="KW-0441">Lipid A biosynthesis</keyword>
<keyword id="KW-0444">Lipid biosynthesis</keyword>
<keyword id="KW-0443">Lipid metabolism</keyword>
<keyword id="KW-0456">Lyase</keyword>
<keyword id="KW-1185">Reference proteome</keyword>
<dbReference type="EC" id="4.2.1.59" evidence="1"/>
<dbReference type="EMBL" id="CP000569">
    <property type="protein sequence ID" value="ABN73512.1"/>
    <property type="molecule type" value="Genomic_DNA"/>
</dbReference>
<dbReference type="RefSeq" id="WP_005596447.1">
    <property type="nucleotide sequence ID" value="NC_009053.1"/>
</dbReference>
<dbReference type="SMR" id="A3MZC6"/>
<dbReference type="STRING" id="416269.APL_0408"/>
<dbReference type="EnsemblBacteria" id="ABN73512">
    <property type="protein sequence ID" value="ABN73512"/>
    <property type="gene ID" value="APL_0408"/>
</dbReference>
<dbReference type="GeneID" id="48598576"/>
<dbReference type="KEGG" id="apl:APL_0408"/>
<dbReference type="eggNOG" id="COG0764">
    <property type="taxonomic scope" value="Bacteria"/>
</dbReference>
<dbReference type="HOGENOM" id="CLU_078912_1_0_6"/>
<dbReference type="Proteomes" id="UP000001432">
    <property type="component" value="Chromosome"/>
</dbReference>
<dbReference type="GO" id="GO:0005737">
    <property type="term" value="C:cytoplasm"/>
    <property type="evidence" value="ECO:0007669"/>
    <property type="project" value="UniProtKB-SubCell"/>
</dbReference>
<dbReference type="GO" id="GO:0016020">
    <property type="term" value="C:membrane"/>
    <property type="evidence" value="ECO:0007669"/>
    <property type="project" value="GOC"/>
</dbReference>
<dbReference type="GO" id="GO:0019171">
    <property type="term" value="F:(3R)-hydroxyacyl-[acyl-carrier-protein] dehydratase activity"/>
    <property type="evidence" value="ECO:0007669"/>
    <property type="project" value="UniProtKB-EC"/>
</dbReference>
<dbReference type="GO" id="GO:0006633">
    <property type="term" value="P:fatty acid biosynthetic process"/>
    <property type="evidence" value="ECO:0007669"/>
    <property type="project" value="UniProtKB-UniRule"/>
</dbReference>
<dbReference type="GO" id="GO:0009245">
    <property type="term" value="P:lipid A biosynthetic process"/>
    <property type="evidence" value="ECO:0007669"/>
    <property type="project" value="UniProtKB-UniRule"/>
</dbReference>
<dbReference type="CDD" id="cd01288">
    <property type="entry name" value="FabZ"/>
    <property type="match status" value="1"/>
</dbReference>
<dbReference type="FunFam" id="3.10.129.10:FF:000001">
    <property type="entry name" value="3-hydroxyacyl-[acyl-carrier-protein] dehydratase FabZ"/>
    <property type="match status" value="1"/>
</dbReference>
<dbReference type="Gene3D" id="3.10.129.10">
    <property type="entry name" value="Hotdog Thioesterase"/>
    <property type="match status" value="1"/>
</dbReference>
<dbReference type="HAMAP" id="MF_00406">
    <property type="entry name" value="FabZ"/>
    <property type="match status" value="1"/>
</dbReference>
<dbReference type="InterPro" id="IPR013114">
    <property type="entry name" value="FabA_FabZ"/>
</dbReference>
<dbReference type="InterPro" id="IPR010084">
    <property type="entry name" value="FabZ"/>
</dbReference>
<dbReference type="InterPro" id="IPR029069">
    <property type="entry name" value="HotDog_dom_sf"/>
</dbReference>
<dbReference type="NCBIfam" id="TIGR01750">
    <property type="entry name" value="fabZ"/>
    <property type="match status" value="1"/>
</dbReference>
<dbReference type="NCBIfam" id="NF000582">
    <property type="entry name" value="PRK00006.1"/>
    <property type="match status" value="1"/>
</dbReference>
<dbReference type="PANTHER" id="PTHR30272">
    <property type="entry name" value="3-HYDROXYACYL-[ACYL-CARRIER-PROTEIN] DEHYDRATASE"/>
    <property type="match status" value="1"/>
</dbReference>
<dbReference type="PANTHER" id="PTHR30272:SF1">
    <property type="entry name" value="3-HYDROXYACYL-[ACYL-CARRIER-PROTEIN] DEHYDRATASE"/>
    <property type="match status" value="1"/>
</dbReference>
<dbReference type="Pfam" id="PF07977">
    <property type="entry name" value="FabA"/>
    <property type="match status" value="1"/>
</dbReference>
<dbReference type="SUPFAM" id="SSF54637">
    <property type="entry name" value="Thioesterase/thiol ester dehydrase-isomerase"/>
    <property type="match status" value="1"/>
</dbReference>
<accession>A3MZC6</accession>
<name>FABZ_ACTP2</name>
<evidence type="ECO:0000255" key="1">
    <source>
        <dbReference type="HAMAP-Rule" id="MF_00406"/>
    </source>
</evidence>
<protein>
    <recommendedName>
        <fullName evidence="1">3-hydroxyacyl-[acyl-carrier-protein] dehydratase FabZ</fullName>
        <ecNumber evidence="1">4.2.1.59</ecNumber>
    </recommendedName>
    <alternativeName>
        <fullName evidence="1">(3R)-hydroxymyristoyl-[acyl-carrier-protein] dehydratase</fullName>
        <shortName evidence="1">(3R)-hydroxymyristoyl-ACP dehydrase</shortName>
    </alternativeName>
    <alternativeName>
        <fullName evidence="1">Beta-hydroxyacyl-ACP dehydratase</fullName>
    </alternativeName>
</protein>
<gene>
    <name evidence="1" type="primary">fabZ</name>
    <name type="ordered locus">APL_0408</name>
</gene>
<comment type="function">
    <text evidence="1">Involved in unsaturated fatty acids biosynthesis. Catalyzes the dehydration of short chain beta-hydroxyacyl-ACPs and long chain saturated and unsaturated beta-hydroxyacyl-ACPs.</text>
</comment>
<comment type="catalytic activity">
    <reaction evidence="1">
        <text>a (3R)-hydroxyacyl-[ACP] = a (2E)-enoyl-[ACP] + H2O</text>
        <dbReference type="Rhea" id="RHEA:13097"/>
        <dbReference type="Rhea" id="RHEA-COMP:9925"/>
        <dbReference type="Rhea" id="RHEA-COMP:9945"/>
        <dbReference type="ChEBI" id="CHEBI:15377"/>
        <dbReference type="ChEBI" id="CHEBI:78784"/>
        <dbReference type="ChEBI" id="CHEBI:78827"/>
        <dbReference type="EC" id="4.2.1.59"/>
    </reaction>
</comment>
<comment type="subcellular location">
    <subcellularLocation>
        <location evidence="1">Cytoplasm</location>
    </subcellularLocation>
</comment>
<comment type="similarity">
    <text evidence="1">Belongs to the thioester dehydratase family. FabZ subfamily.</text>
</comment>
<feature type="chain" id="PRO_0000301877" description="3-hydroxyacyl-[acyl-carrier-protein] dehydratase FabZ">
    <location>
        <begin position="1"/>
        <end position="154"/>
    </location>
</feature>
<feature type="active site" evidence="1">
    <location>
        <position position="60"/>
    </location>
</feature>
<sequence>MTIEVQENREPKIIEVTEIMKMLPHRYPFLLVDRVIDFEEGKWLKAIKNVTVNEPCFTGHFPESPIFPGVLILEAMAQATGVLAVATHGKMAQDELYYFAAIDNARFKRPVVPGDQLTFEVEFLKEMRGITKFTGKAFVDGKLVCEADLMCARK</sequence>
<proteinExistence type="inferred from homology"/>
<reference key="1">
    <citation type="journal article" date="2008" name="J. Bacteriol.">
        <title>The complete genome sequence of Actinobacillus pleuropneumoniae L20 (serotype 5b).</title>
        <authorList>
            <person name="Foote S.J."/>
            <person name="Bosse J.T."/>
            <person name="Bouevitch A.B."/>
            <person name="Langford P.R."/>
            <person name="Young N.M."/>
            <person name="Nash J.H.E."/>
        </authorList>
    </citation>
    <scope>NUCLEOTIDE SEQUENCE [LARGE SCALE GENOMIC DNA]</scope>
    <source>
        <strain>L20</strain>
    </source>
</reference>